<keyword id="KW-0929">Antimicrobial</keyword>
<keyword id="KW-1015">Disulfide bond</keyword>
<keyword id="KW-0295">Fungicide</keyword>
<keyword id="KW-0611">Plant defense</keyword>
<keyword id="KW-1185">Reference proteome</keyword>
<keyword id="KW-0964">Secreted</keyword>
<keyword id="KW-0732">Signal</keyword>
<reference key="1">
    <citation type="journal article" date="1998" name="Nature">
        <title>Analysis of 1.9 Mb of contiguous sequence from chromosome 4 of Arabidopsis thaliana.</title>
        <authorList>
            <person name="Bevan M."/>
            <person name="Bancroft I."/>
            <person name="Bent E."/>
            <person name="Love K."/>
            <person name="Goodman H.M."/>
            <person name="Dean C."/>
            <person name="Bergkamp R."/>
            <person name="Dirkse W."/>
            <person name="van Staveren M."/>
            <person name="Stiekema W."/>
            <person name="Drost L."/>
            <person name="Ridley P."/>
            <person name="Hudson S.-A."/>
            <person name="Patel K."/>
            <person name="Murphy G."/>
            <person name="Piffanelli P."/>
            <person name="Wedler H."/>
            <person name="Wedler E."/>
            <person name="Wambutt R."/>
            <person name="Weitzenegger T."/>
            <person name="Pohl T."/>
            <person name="Terryn N."/>
            <person name="Gielen J."/>
            <person name="Villarroel R."/>
            <person name="De Clercq R."/>
            <person name="van Montagu M."/>
            <person name="Lecharny A."/>
            <person name="Aubourg S."/>
            <person name="Gy I."/>
            <person name="Kreis M."/>
            <person name="Lao N."/>
            <person name="Kavanagh T."/>
            <person name="Hempel S."/>
            <person name="Kotter P."/>
            <person name="Entian K.-D."/>
            <person name="Rieger M."/>
            <person name="Schaefer M."/>
            <person name="Funk B."/>
            <person name="Mueller-Auer S."/>
            <person name="Silvey M."/>
            <person name="James R."/>
            <person name="Monfort A."/>
            <person name="Pons A."/>
            <person name="Puigdomenech P."/>
            <person name="Douka A."/>
            <person name="Voukelatou E."/>
            <person name="Milioni D."/>
            <person name="Hatzopoulos P."/>
            <person name="Piravandi E."/>
            <person name="Obermaier B."/>
            <person name="Hilbert H."/>
            <person name="Duesterhoeft A."/>
            <person name="Moores T."/>
            <person name="Jones J.D.G."/>
            <person name="Eneva T."/>
            <person name="Palme K."/>
            <person name="Benes V."/>
            <person name="Rechmann S."/>
            <person name="Ansorge W."/>
            <person name="Cooke R."/>
            <person name="Berger C."/>
            <person name="Delseny M."/>
            <person name="Voet M."/>
            <person name="Volckaert G."/>
            <person name="Mewes H.-W."/>
            <person name="Klosterman S."/>
            <person name="Schueller C."/>
            <person name="Chalwatzis N."/>
        </authorList>
    </citation>
    <scope>NUCLEOTIDE SEQUENCE [LARGE SCALE GENOMIC DNA]</scope>
    <source>
        <strain>cv. Columbia</strain>
    </source>
</reference>
<reference key="2">
    <citation type="journal article" date="1999" name="Nature">
        <title>Sequence and analysis of chromosome 4 of the plant Arabidopsis thaliana.</title>
        <authorList>
            <person name="Mayer K.F.X."/>
            <person name="Schueller C."/>
            <person name="Wambutt R."/>
            <person name="Murphy G."/>
            <person name="Volckaert G."/>
            <person name="Pohl T."/>
            <person name="Duesterhoeft A."/>
            <person name="Stiekema W."/>
            <person name="Entian K.-D."/>
            <person name="Terryn N."/>
            <person name="Harris B."/>
            <person name="Ansorge W."/>
            <person name="Brandt P."/>
            <person name="Grivell L.A."/>
            <person name="Rieger M."/>
            <person name="Weichselgartner M."/>
            <person name="de Simone V."/>
            <person name="Obermaier B."/>
            <person name="Mache R."/>
            <person name="Mueller M."/>
            <person name="Kreis M."/>
            <person name="Delseny M."/>
            <person name="Puigdomenech P."/>
            <person name="Watson M."/>
            <person name="Schmidtheini T."/>
            <person name="Reichert B."/>
            <person name="Portetelle D."/>
            <person name="Perez-Alonso M."/>
            <person name="Boutry M."/>
            <person name="Bancroft I."/>
            <person name="Vos P."/>
            <person name="Hoheisel J."/>
            <person name="Zimmermann W."/>
            <person name="Wedler H."/>
            <person name="Ridley P."/>
            <person name="Langham S.-A."/>
            <person name="McCullagh B."/>
            <person name="Bilham L."/>
            <person name="Robben J."/>
            <person name="van der Schueren J."/>
            <person name="Grymonprez B."/>
            <person name="Chuang Y.-J."/>
            <person name="Vandenbussche F."/>
            <person name="Braeken M."/>
            <person name="Weltjens I."/>
            <person name="Voet M."/>
            <person name="Bastiaens I."/>
            <person name="Aert R."/>
            <person name="Defoor E."/>
            <person name="Weitzenegger T."/>
            <person name="Bothe G."/>
            <person name="Ramsperger U."/>
            <person name="Hilbert H."/>
            <person name="Braun M."/>
            <person name="Holzer E."/>
            <person name="Brandt A."/>
            <person name="Peters S."/>
            <person name="van Staveren M."/>
            <person name="Dirkse W."/>
            <person name="Mooijman P."/>
            <person name="Klein Lankhorst R."/>
            <person name="Rose M."/>
            <person name="Hauf J."/>
            <person name="Koetter P."/>
            <person name="Berneiser S."/>
            <person name="Hempel S."/>
            <person name="Feldpausch M."/>
            <person name="Lamberth S."/>
            <person name="Van den Daele H."/>
            <person name="De Keyser A."/>
            <person name="Buysshaert C."/>
            <person name="Gielen J."/>
            <person name="Villarroel R."/>
            <person name="De Clercq R."/>
            <person name="van Montagu M."/>
            <person name="Rogers J."/>
            <person name="Cronin A."/>
            <person name="Quail M.A."/>
            <person name="Bray-Allen S."/>
            <person name="Clark L."/>
            <person name="Doggett J."/>
            <person name="Hall S."/>
            <person name="Kay M."/>
            <person name="Lennard N."/>
            <person name="McLay K."/>
            <person name="Mayes R."/>
            <person name="Pettett A."/>
            <person name="Rajandream M.A."/>
            <person name="Lyne M."/>
            <person name="Benes V."/>
            <person name="Rechmann S."/>
            <person name="Borkova D."/>
            <person name="Bloecker H."/>
            <person name="Scharfe M."/>
            <person name="Grimm M."/>
            <person name="Loehnert T.-H."/>
            <person name="Dose S."/>
            <person name="de Haan M."/>
            <person name="Maarse A.C."/>
            <person name="Schaefer M."/>
            <person name="Mueller-Auer S."/>
            <person name="Gabel C."/>
            <person name="Fuchs M."/>
            <person name="Fartmann B."/>
            <person name="Granderath K."/>
            <person name="Dauner D."/>
            <person name="Herzl A."/>
            <person name="Neumann S."/>
            <person name="Argiriou A."/>
            <person name="Vitale D."/>
            <person name="Liguori R."/>
            <person name="Piravandi E."/>
            <person name="Massenet O."/>
            <person name="Quigley F."/>
            <person name="Clabauld G."/>
            <person name="Muendlein A."/>
            <person name="Felber R."/>
            <person name="Schnabl S."/>
            <person name="Hiller R."/>
            <person name="Schmidt W."/>
            <person name="Lecharny A."/>
            <person name="Aubourg S."/>
            <person name="Chefdor F."/>
            <person name="Cooke R."/>
            <person name="Berger C."/>
            <person name="Monfort A."/>
            <person name="Casacuberta E."/>
            <person name="Gibbons T."/>
            <person name="Weber N."/>
            <person name="Vandenbol M."/>
            <person name="Bargues M."/>
            <person name="Terol J."/>
            <person name="Torres A."/>
            <person name="Perez-Perez A."/>
            <person name="Purnelle B."/>
            <person name="Bent E."/>
            <person name="Johnson S."/>
            <person name="Tacon D."/>
            <person name="Jesse T."/>
            <person name="Heijnen L."/>
            <person name="Schwarz S."/>
            <person name="Scholler P."/>
            <person name="Heber S."/>
            <person name="Francs P."/>
            <person name="Bielke C."/>
            <person name="Frishman D."/>
            <person name="Haase D."/>
            <person name="Lemcke K."/>
            <person name="Mewes H.-W."/>
            <person name="Stocker S."/>
            <person name="Zaccaria P."/>
            <person name="Bevan M."/>
            <person name="Wilson R.K."/>
            <person name="de la Bastide M."/>
            <person name="Habermann K."/>
            <person name="Parnell L."/>
            <person name="Dedhia N."/>
            <person name="Gnoj L."/>
            <person name="Schutz K."/>
            <person name="Huang E."/>
            <person name="Spiegel L."/>
            <person name="Sekhon M."/>
            <person name="Murray J."/>
            <person name="Sheet P."/>
            <person name="Cordes M."/>
            <person name="Abu-Threideh J."/>
            <person name="Stoneking T."/>
            <person name="Kalicki J."/>
            <person name="Graves T."/>
            <person name="Harmon G."/>
            <person name="Edwards J."/>
            <person name="Latreille P."/>
            <person name="Courtney L."/>
            <person name="Cloud J."/>
            <person name="Abbott A."/>
            <person name="Scott K."/>
            <person name="Johnson D."/>
            <person name="Minx P."/>
            <person name="Bentley D."/>
            <person name="Fulton B."/>
            <person name="Miller N."/>
            <person name="Greco T."/>
            <person name="Kemp K."/>
            <person name="Kramer J."/>
            <person name="Fulton L."/>
            <person name="Mardis E."/>
            <person name="Dante M."/>
            <person name="Pepin K."/>
            <person name="Hillier L.W."/>
            <person name="Nelson J."/>
            <person name="Spieth J."/>
            <person name="Ryan E."/>
            <person name="Andrews S."/>
            <person name="Geisel C."/>
            <person name="Layman D."/>
            <person name="Du H."/>
            <person name="Ali J."/>
            <person name="Berghoff A."/>
            <person name="Jones K."/>
            <person name="Drone K."/>
            <person name="Cotton M."/>
            <person name="Joshu C."/>
            <person name="Antonoiu B."/>
            <person name="Zidanic M."/>
            <person name="Strong C."/>
            <person name="Sun H."/>
            <person name="Lamar B."/>
            <person name="Yordan C."/>
            <person name="Ma P."/>
            <person name="Zhong J."/>
            <person name="Preston R."/>
            <person name="Vil D."/>
            <person name="Shekher M."/>
            <person name="Matero A."/>
            <person name="Shah R."/>
            <person name="Swaby I.K."/>
            <person name="O'Shaughnessy A."/>
            <person name="Rodriguez M."/>
            <person name="Hoffman J."/>
            <person name="Till S."/>
            <person name="Granat S."/>
            <person name="Shohdy N."/>
            <person name="Hasegawa A."/>
            <person name="Hameed A."/>
            <person name="Lodhi M."/>
            <person name="Johnson A."/>
            <person name="Chen E."/>
            <person name="Marra M.A."/>
            <person name="Martienssen R."/>
            <person name="McCombie W.R."/>
        </authorList>
    </citation>
    <scope>NUCLEOTIDE SEQUENCE [LARGE SCALE GENOMIC DNA]</scope>
    <source>
        <strain>cv. Columbia</strain>
    </source>
</reference>
<reference key="3">
    <citation type="journal article" date="2017" name="Plant J.">
        <title>Araport11: a complete reannotation of the Arabidopsis thaliana reference genome.</title>
        <authorList>
            <person name="Cheng C.Y."/>
            <person name="Krishnakumar V."/>
            <person name="Chan A.P."/>
            <person name="Thibaud-Nissen F."/>
            <person name="Schobel S."/>
            <person name="Town C.D."/>
        </authorList>
    </citation>
    <scope>GENOME REANNOTATION</scope>
    <source>
        <strain>cv. Columbia</strain>
    </source>
</reference>
<reference key="4">
    <citation type="journal article" date="2005" name="Plant Physiol.">
        <title>Genome organization of more than 300 defensin-like genes in Arabidopsis.</title>
        <authorList>
            <person name="Silverstein K.A.T."/>
            <person name="Graham M.A."/>
            <person name="Paape T.D."/>
            <person name="VandenBosch K.A."/>
        </authorList>
    </citation>
    <scope>GENE FAMILY</scope>
</reference>
<feature type="signal peptide" evidence="2">
    <location>
        <begin position="1"/>
        <end position="26"/>
    </location>
</feature>
<feature type="chain" id="PRO_0000379603" description="Defensin-like protein 21">
    <location>
        <begin position="27"/>
        <end position="94"/>
    </location>
</feature>
<feature type="disulfide bond" evidence="1">
    <location>
        <begin position="41"/>
        <end position="92"/>
    </location>
</feature>
<feature type="disulfide bond" evidence="1">
    <location>
        <begin position="51"/>
        <end position="79"/>
    </location>
</feature>
<feature type="disulfide bond" evidence="1">
    <location>
        <begin position="65"/>
        <end position="88"/>
    </location>
</feature>
<feature type="disulfide bond" evidence="1">
    <location>
        <begin position="69"/>
        <end position="90"/>
    </location>
</feature>
<comment type="subcellular location">
    <subcellularLocation>
        <location evidence="1">Secreted</location>
    </subcellularLocation>
</comment>
<comment type="similarity">
    <text evidence="3">Belongs to the DEFL family.</text>
</comment>
<comment type="sequence caution" evidence="3">
    <conflict type="erroneous gene model prediction">
        <sequence resource="EMBL-CDS" id="CAB10206"/>
    </conflict>
    <text>The predicted gene has been split into 3 genes: At4g14270, At4g14272 and At4g14276.</text>
</comment>
<comment type="sequence caution" evidence="3">
    <conflict type="erroneous gene model prediction">
        <sequence resource="EMBL-CDS" id="CAB78469"/>
    </conflict>
    <text>The predicted gene has been split into 3 genes: At4g14270, At4g14272 and At4g14276.</text>
</comment>
<sequence>MVRTNVVSFVLFAAIVLCIGSIQIDGQKHTAPWIPEDNSICCKEHPSVGRCLPNIDDSAEKGGKCWKFCIEGCETGGFCKLFGHKHICHCNCSG</sequence>
<organism>
    <name type="scientific">Arabidopsis thaliana</name>
    <name type="common">Mouse-ear cress</name>
    <dbReference type="NCBI Taxonomy" id="3702"/>
    <lineage>
        <taxon>Eukaryota</taxon>
        <taxon>Viridiplantae</taxon>
        <taxon>Streptophyta</taxon>
        <taxon>Embryophyta</taxon>
        <taxon>Tracheophyta</taxon>
        <taxon>Spermatophyta</taxon>
        <taxon>Magnoliopsida</taxon>
        <taxon>eudicotyledons</taxon>
        <taxon>Gunneridae</taxon>
        <taxon>Pentapetalae</taxon>
        <taxon>rosids</taxon>
        <taxon>malvids</taxon>
        <taxon>Brassicales</taxon>
        <taxon>Brassicaceae</taxon>
        <taxon>Camelineae</taxon>
        <taxon>Arabidopsis</taxon>
    </lineage>
</organism>
<proteinExistence type="evidence at transcript level"/>
<accession>P0CAX9</accession>
<accession>O23285</accession>
<accession>Q2V3I6</accession>
<name>DEF21_ARATH</name>
<evidence type="ECO:0000250" key="1"/>
<evidence type="ECO:0000255" key="2"/>
<evidence type="ECO:0000305" key="3"/>
<protein>
    <recommendedName>
        <fullName>Defensin-like protein 21</fullName>
    </recommendedName>
</protein>
<dbReference type="EMBL" id="Z97335">
    <property type="protein sequence ID" value="CAB10206.1"/>
    <property type="status" value="ALT_SEQ"/>
    <property type="molecule type" value="Genomic_DNA"/>
</dbReference>
<dbReference type="EMBL" id="AL161538">
    <property type="protein sequence ID" value="CAB78469.1"/>
    <property type="status" value="ALT_SEQ"/>
    <property type="molecule type" value="Genomic_DNA"/>
</dbReference>
<dbReference type="EMBL" id="CP002687">
    <property type="protein sequence ID" value="AEE83408.1"/>
    <property type="molecule type" value="Genomic_DNA"/>
</dbReference>
<dbReference type="PIR" id="D71404">
    <property type="entry name" value="D71404"/>
</dbReference>
<dbReference type="RefSeq" id="NP_001031636.2">
    <property type="nucleotide sequence ID" value="NM_001036559.3"/>
</dbReference>
<dbReference type="SMR" id="P0CAX9"/>
<dbReference type="STRING" id="3702.P0CAX9"/>
<dbReference type="PaxDb" id="3702-AT4G14276.1"/>
<dbReference type="ProteomicsDB" id="224687"/>
<dbReference type="EnsemblPlants" id="AT4G14276.1">
    <property type="protein sequence ID" value="AT4G14276.1"/>
    <property type="gene ID" value="AT4G14276"/>
</dbReference>
<dbReference type="GeneID" id="3769852"/>
<dbReference type="Gramene" id="AT4G14276.1">
    <property type="protein sequence ID" value="AT4G14276.1"/>
    <property type="gene ID" value="AT4G14276"/>
</dbReference>
<dbReference type="KEGG" id="ath:AT4G14276"/>
<dbReference type="Araport" id="AT4G14276"/>
<dbReference type="TAIR" id="AT4G14276"/>
<dbReference type="eggNOG" id="ENOG502SEE3">
    <property type="taxonomic scope" value="Eukaryota"/>
</dbReference>
<dbReference type="HOGENOM" id="CLU_185732_0_0_1"/>
<dbReference type="InParanoid" id="P0CAX9"/>
<dbReference type="OMA" id="CIADCER"/>
<dbReference type="OrthoDB" id="813477at2759"/>
<dbReference type="PhylomeDB" id="P0CAX9"/>
<dbReference type="PRO" id="PR:P0CAX9"/>
<dbReference type="Proteomes" id="UP000006548">
    <property type="component" value="Chromosome 4"/>
</dbReference>
<dbReference type="ExpressionAtlas" id="P0CAX9">
    <property type="expression patterns" value="baseline and differential"/>
</dbReference>
<dbReference type="GO" id="GO:0005576">
    <property type="term" value="C:extracellular region"/>
    <property type="evidence" value="ECO:0007669"/>
    <property type="project" value="UniProtKB-SubCell"/>
</dbReference>
<dbReference type="GO" id="GO:0050832">
    <property type="term" value="P:defense response to fungus"/>
    <property type="evidence" value="ECO:0007669"/>
    <property type="project" value="UniProtKB-KW"/>
</dbReference>
<dbReference type="GO" id="GO:0031640">
    <property type="term" value="P:killing of cells of another organism"/>
    <property type="evidence" value="ECO:0007669"/>
    <property type="project" value="UniProtKB-KW"/>
</dbReference>
<dbReference type="InterPro" id="IPR022618">
    <property type="entry name" value="Defensin-like_20-28"/>
</dbReference>
<dbReference type="PANTHER" id="PTHR34453">
    <property type="entry name" value="DEFENSIN-LIKE (DEFL) FAMILY PROTEIN-RELATED"/>
    <property type="match status" value="1"/>
</dbReference>
<dbReference type="PANTHER" id="PTHR34453:SF3">
    <property type="entry name" value="DEFENSIN-LIKE (DEFL) FAMILY PROTEIN-RELATED"/>
    <property type="match status" value="1"/>
</dbReference>
<dbReference type="Pfam" id="PF10868">
    <property type="entry name" value="Defensin_like"/>
    <property type="match status" value="1"/>
</dbReference>
<gene>
    <name type="ordered locus">At4g14276</name>
    <name type="ORF">dl3175w</name>
</gene>